<protein>
    <recommendedName>
        <fullName>Rhodopsin</fullName>
    </recommendedName>
</protein>
<proteinExistence type="evidence at transcript level"/>
<accession>Q28886</accession>
<name>OPSD_MACFA</name>
<gene>
    <name type="primary">RHO</name>
</gene>
<dbReference type="EMBL" id="S76579">
    <property type="protein sequence ID" value="AAB33079.2"/>
    <property type="molecule type" value="mRNA"/>
</dbReference>
<dbReference type="RefSeq" id="NP_001270289.1">
    <property type="nucleotide sequence ID" value="NM_001283360.1"/>
</dbReference>
<dbReference type="SMR" id="Q28886"/>
<dbReference type="STRING" id="9541.ENSMFAP00000031097"/>
<dbReference type="GlyCosmos" id="Q28886">
    <property type="glycosylation" value="2 sites, No reported glycans"/>
</dbReference>
<dbReference type="eggNOG" id="KOG3656">
    <property type="taxonomic scope" value="Eukaryota"/>
</dbReference>
<dbReference type="Proteomes" id="UP000233100">
    <property type="component" value="Unplaced"/>
</dbReference>
<dbReference type="GO" id="GO:0016020">
    <property type="term" value="C:membrane"/>
    <property type="evidence" value="ECO:0000250"/>
    <property type="project" value="UniProtKB"/>
</dbReference>
<dbReference type="GO" id="GO:0097381">
    <property type="term" value="C:photoreceptor disc membrane"/>
    <property type="evidence" value="ECO:0000250"/>
    <property type="project" value="UniProtKB"/>
</dbReference>
<dbReference type="GO" id="GO:0060342">
    <property type="term" value="C:photoreceptor inner segment membrane"/>
    <property type="evidence" value="ECO:0000250"/>
    <property type="project" value="UniProtKB"/>
</dbReference>
<dbReference type="GO" id="GO:0042622">
    <property type="term" value="C:photoreceptor outer segment membrane"/>
    <property type="evidence" value="ECO:0000250"/>
    <property type="project" value="UniProtKB"/>
</dbReference>
<dbReference type="GO" id="GO:0005886">
    <property type="term" value="C:plasma membrane"/>
    <property type="evidence" value="ECO:0000250"/>
    <property type="project" value="UniProtKB"/>
</dbReference>
<dbReference type="GO" id="GO:0005502">
    <property type="term" value="F:11-cis retinal binding"/>
    <property type="evidence" value="ECO:0000250"/>
    <property type="project" value="UniProtKB"/>
</dbReference>
<dbReference type="GO" id="GO:0008020">
    <property type="term" value="F:G protein-coupled photoreceptor activity"/>
    <property type="evidence" value="ECO:0000250"/>
    <property type="project" value="UniProtKB"/>
</dbReference>
<dbReference type="GO" id="GO:0046872">
    <property type="term" value="F:metal ion binding"/>
    <property type="evidence" value="ECO:0007669"/>
    <property type="project" value="UniProtKB-KW"/>
</dbReference>
<dbReference type="GO" id="GO:0016038">
    <property type="term" value="P:absorption of visible light"/>
    <property type="evidence" value="ECO:0000250"/>
    <property type="project" value="AgBase"/>
</dbReference>
<dbReference type="GO" id="GO:0016056">
    <property type="term" value="P:G protein-coupled opsin signaling pathway"/>
    <property type="evidence" value="ECO:0000250"/>
    <property type="project" value="UniProtKB"/>
</dbReference>
<dbReference type="GO" id="GO:0007186">
    <property type="term" value="P:G protein-coupled receptor signaling pathway"/>
    <property type="evidence" value="ECO:0000250"/>
    <property type="project" value="UniProtKB"/>
</dbReference>
<dbReference type="GO" id="GO:0007601">
    <property type="term" value="P:visual perception"/>
    <property type="evidence" value="ECO:0007669"/>
    <property type="project" value="UniProtKB-KW"/>
</dbReference>
<dbReference type="CDD" id="cd15080">
    <property type="entry name" value="7tmA_MWS_opsin"/>
    <property type="match status" value="1"/>
</dbReference>
<dbReference type="FunFam" id="1.20.1070.10:FF:000018">
    <property type="entry name" value="Rhodopsin"/>
    <property type="match status" value="1"/>
</dbReference>
<dbReference type="Gene3D" id="1.20.1070.10">
    <property type="entry name" value="Rhodopsin 7-helix transmembrane proteins"/>
    <property type="match status" value="1"/>
</dbReference>
<dbReference type="InterPro" id="IPR050125">
    <property type="entry name" value="GPCR_opsins"/>
</dbReference>
<dbReference type="InterPro" id="IPR000276">
    <property type="entry name" value="GPCR_Rhodpsn"/>
</dbReference>
<dbReference type="InterPro" id="IPR017452">
    <property type="entry name" value="GPCR_Rhodpsn_7TM"/>
</dbReference>
<dbReference type="InterPro" id="IPR001760">
    <property type="entry name" value="Opsin"/>
</dbReference>
<dbReference type="InterPro" id="IPR027430">
    <property type="entry name" value="Retinal_BS"/>
</dbReference>
<dbReference type="InterPro" id="IPR000732">
    <property type="entry name" value="Rhodopsin"/>
</dbReference>
<dbReference type="InterPro" id="IPR019477">
    <property type="entry name" value="Rhodopsin_N"/>
</dbReference>
<dbReference type="PANTHER" id="PTHR24240">
    <property type="entry name" value="OPSIN"/>
    <property type="match status" value="1"/>
</dbReference>
<dbReference type="Pfam" id="PF00001">
    <property type="entry name" value="7tm_1"/>
    <property type="match status" value="1"/>
</dbReference>
<dbReference type="Pfam" id="PF10413">
    <property type="entry name" value="Rhodopsin_N"/>
    <property type="match status" value="1"/>
</dbReference>
<dbReference type="PRINTS" id="PR00237">
    <property type="entry name" value="GPCRRHODOPSN"/>
</dbReference>
<dbReference type="PRINTS" id="PR00238">
    <property type="entry name" value="OPSIN"/>
</dbReference>
<dbReference type="PRINTS" id="PR00579">
    <property type="entry name" value="RHODOPSIN"/>
</dbReference>
<dbReference type="SUPFAM" id="SSF81321">
    <property type="entry name" value="Family A G protein-coupled receptor-like"/>
    <property type="match status" value="1"/>
</dbReference>
<dbReference type="PROSITE" id="PS00237">
    <property type="entry name" value="G_PROTEIN_RECEP_F1_1"/>
    <property type="match status" value="1"/>
</dbReference>
<dbReference type="PROSITE" id="PS50262">
    <property type="entry name" value="G_PROTEIN_RECEP_F1_2"/>
    <property type="match status" value="1"/>
</dbReference>
<dbReference type="PROSITE" id="PS00238">
    <property type="entry name" value="OPSIN"/>
    <property type="match status" value="1"/>
</dbReference>
<organism>
    <name type="scientific">Macaca fascicularis</name>
    <name type="common">Crab-eating macaque</name>
    <name type="synonym">Cynomolgus monkey</name>
    <dbReference type="NCBI Taxonomy" id="9541"/>
    <lineage>
        <taxon>Eukaryota</taxon>
        <taxon>Metazoa</taxon>
        <taxon>Chordata</taxon>
        <taxon>Craniata</taxon>
        <taxon>Vertebrata</taxon>
        <taxon>Euteleostomi</taxon>
        <taxon>Mammalia</taxon>
        <taxon>Eutheria</taxon>
        <taxon>Euarchontoglires</taxon>
        <taxon>Primates</taxon>
        <taxon>Haplorrhini</taxon>
        <taxon>Catarrhini</taxon>
        <taxon>Cercopithecidae</taxon>
        <taxon>Cercopithecinae</taxon>
        <taxon>Macaca</taxon>
    </lineage>
</organism>
<feature type="chain" id="PRO_0000197685" description="Rhodopsin">
    <location>
        <begin position="1"/>
        <end position="348"/>
    </location>
</feature>
<feature type="topological domain" description="Extracellular" evidence="7">
    <location>
        <begin position="1"/>
        <end position="36"/>
    </location>
</feature>
<feature type="transmembrane region" description="Helical; Name=1" evidence="1">
    <location>
        <begin position="37"/>
        <end position="61"/>
    </location>
</feature>
<feature type="topological domain" description="Cytoplasmic" evidence="7">
    <location>
        <begin position="62"/>
        <end position="73"/>
    </location>
</feature>
<feature type="transmembrane region" description="Helical; Name=2" evidence="1">
    <location>
        <begin position="74"/>
        <end position="96"/>
    </location>
</feature>
<feature type="topological domain" description="Extracellular" evidence="7">
    <location>
        <begin position="97"/>
        <end position="110"/>
    </location>
</feature>
<feature type="transmembrane region" description="Helical; Name=3" evidence="1">
    <location>
        <begin position="111"/>
        <end position="133"/>
    </location>
</feature>
<feature type="topological domain" description="Cytoplasmic" evidence="7">
    <location>
        <begin position="134"/>
        <end position="152"/>
    </location>
</feature>
<feature type="transmembrane region" description="Helical; Name=4" evidence="1">
    <location>
        <begin position="153"/>
        <end position="173"/>
    </location>
</feature>
<feature type="topological domain" description="Extracellular" evidence="7">
    <location>
        <begin position="174"/>
        <end position="202"/>
    </location>
</feature>
<feature type="transmembrane region" description="Helical; Name=5" evidence="1">
    <location>
        <begin position="203"/>
        <end position="224"/>
    </location>
</feature>
<feature type="topological domain" description="Cytoplasmic" evidence="7">
    <location>
        <begin position="225"/>
        <end position="252"/>
    </location>
</feature>
<feature type="transmembrane region" description="Helical; Name=6" evidence="1">
    <location>
        <begin position="253"/>
        <end position="274"/>
    </location>
</feature>
<feature type="topological domain" description="Extracellular" evidence="7">
    <location>
        <begin position="275"/>
        <end position="286"/>
    </location>
</feature>
<feature type="transmembrane region" description="Helical; Name=7" evidence="1">
    <location>
        <begin position="287"/>
        <end position="308"/>
    </location>
</feature>
<feature type="topological domain" description="Cytoplasmic" evidence="7">
    <location>
        <begin position="309"/>
        <end position="348"/>
    </location>
</feature>
<feature type="region of interest" description="Interaction with SAG" evidence="1">
    <location>
        <begin position="330"/>
        <end position="348"/>
    </location>
</feature>
<feature type="short sequence motif" description="'Ionic lock' involved in activated form stabilization" evidence="1">
    <location>
        <begin position="134"/>
        <end position="136"/>
    </location>
</feature>
<feature type="binding site" evidence="1">
    <location>
        <position position="201"/>
    </location>
    <ligand>
        <name>Zn(2+)</name>
        <dbReference type="ChEBI" id="CHEBI:29105"/>
    </ligand>
</feature>
<feature type="binding site" evidence="1">
    <location>
        <position position="279"/>
    </location>
    <ligand>
        <name>Zn(2+)</name>
        <dbReference type="ChEBI" id="CHEBI:29105"/>
    </ligand>
</feature>
<feature type="site" description="Plays an important role in the conformation switch to the active conformation" evidence="1">
    <location>
        <position position="113"/>
    </location>
</feature>
<feature type="modified residue" description="N-acetylmethionine" evidence="1">
    <location>
        <position position="1"/>
    </location>
</feature>
<feature type="modified residue" description="N6-(retinylidene)lysine" evidence="1">
    <location>
        <position position="296"/>
    </location>
</feature>
<feature type="modified residue" description="Phosphoserine" evidence="2">
    <location>
        <position position="334"/>
    </location>
</feature>
<feature type="modified residue" description="Phosphothreonine" evidence="2">
    <location>
        <position position="336"/>
    </location>
</feature>
<feature type="modified residue" description="Phosphoserine" evidence="2">
    <location>
        <position position="338"/>
    </location>
</feature>
<feature type="modified residue" description="Phosphothreonine" evidence="1">
    <location>
        <position position="340"/>
    </location>
</feature>
<feature type="modified residue" description="Phosphothreonine" evidence="1">
    <location>
        <position position="342"/>
    </location>
</feature>
<feature type="modified residue" description="Phosphoserine" evidence="1">
    <location>
        <position position="343"/>
    </location>
</feature>
<feature type="lipid moiety-binding region" description="S-palmitoyl cysteine" evidence="1">
    <location>
        <position position="322"/>
    </location>
</feature>
<feature type="lipid moiety-binding region" description="S-palmitoyl cysteine" evidence="1">
    <location>
        <position position="323"/>
    </location>
</feature>
<feature type="glycosylation site" description="N-linked (GlcNAc...) asparagine" evidence="5">
    <location>
        <position position="2"/>
    </location>
</feature>
<feature type="glycosylation site" description="N-linked (GlcNAc...) asparagine" evidence="5">
    <location>
        <position position="15"/>
    </location>
</feature>
<feature type="disulfide bond" evidence="6">
    <location>
        <begin position="110"/>
        <end position="187"/>
    </location>
</feature>
<reference key="1">
    <citation type="journal article" date="1995" name="Invest. Ophthalmol. Vis. Sci.">
        <title>Cloning and characterization of rod opsin cDNA from the Old World monkey, Macaca fascicularis.</title>
        <authorList>
            <person name="Nickells R.W."/>
            <person name="Burgoyne C.F."/>
            <person name="Quigley H.A."/>
            <person name="Zack D.J."/>
        </authorList>
    </citation>
    <scope>NUCLEOTIDE SEQUENCE [MRNA]</scope>
</reference>
<keyword id="KW-0007">Acetylation</keyword>
<keyword id="KW-0966">Cell projection</keyword>
<keyword id="KW-0157">Chromophore</keyword>
<keyword id="KW-1015">Disulfide bond</keyword>
<keyword id="KW-0297">G-protein coupled receptor</keyword>
<keyword id="KW-0325">Glycoprotein</keyword>
<keyword id="KW-0449">Lipoprotein</keyword>
<keyword id="KW-0472">Membrane</keyword>
<keyword id="KW-0479">Metal-binding</keyword>
<keyword id="KW-0564">Palmitate</keyword>
<keyword id="KW-0597">Phosphoprotein</keyword>
<keyword id="KW-0600">Photoreceptor protein</keyword>
<keyword id="KW-0675">Receptor</keyword>
<keyword id="KW-1185">Reference proteome</keyword>
<keyword id="KW-0681">Retinal protein</keyword>
<keyword id="KW-0716">Sensory transduction</keyword>
<keyword id="KW-0807">Transducer</keyword>
<keyword id="KW-0812">Transmembrane</keyword>
<keyword id="KW-1133">Transmembrane helix</keyword>
<keyword id="KW-0844">Vision</keyword>
<keyword id="KW-0862">Zinc</keyword>
<evidence type="ECO:0000250" key="1">
    <source>
        <dbReference type="UniProtKB" id="P02699"/>
    </source>
</evidence>
<evidence type="ECO:0000250" key="2">
    <source>
        <dbReference type="UniProtKB" id="P02700"/>
    </source>
</evidence>
<evidence type="ECO:0000250" key="3">
    <source>
        <dbReference type="UniProtKB" id="P08100"/>
    </source>
</evidence>
<evidence type="ECO:0000250" key="4">
    <source>
        <dbReference type="UniProtKB" id="P15409"/>
    </source>
</evidence>
<evidence type="ECO:0000255" key="5"/>
<evidence type="ECO:0000255" key="6">
    <source>
        <dbReference type="PROSITE-ProRule" id="PRU00521"/>
    </source>
</evidence>
<evidence type="ECO:0000305" key="7"/>
<sequence length="348" mass="39062">MNGTEGPNFYVPFSNATGVVRSPFEYPQYYLAEPWQFSMLAAYMFLLIVLGFPINFLTLYVTVQHKKLRTPLNYILLNLAVADLFMVFGGFTTTLYTSLHGYFVFGPTGCNAEGFFATLGGEIALWSLVVLAIERYVVVCKPMSNFRFGENHAIMGVAFTWVMALACAAPPLFGWSRYIPEGLQCSCGIDYYTLKPEVNNESFVIYMFVVHFTIPMIVIFFCYGQLVFTVKEARAQQQESATTQKAEKEVTRMVIIMVIAFLICWVPYASVAFYIFTHQGSNFGPIFMTIPAFFAKSASIYNPVIYIMMNKQFRNCMLTTICCGKNPLGDDEASATVSKTETSQVAPA</sequence>
<comment type="function">
    <text evidence="1 3">Photoreceptor required for image-forming vision at low light intensity. Required for photoreceptor cell viability after birth (By similarity). Light-induced isomerization of 11-cis to all-trans retinal triggers a conformational change that activates signaling via G-proteins. Subsequent receptor phosphorylation mediates displacement of the bound G-protein alpha subunit by the arrestin SAG and terminates signaling (By similarity).</text>
</comment>
<comment type="subunit">
    <text evidence="1 3 4">Homodimer. May form a complex composed of RHO, GRK1 and RCVRN in a Ca(2+)-dependent manner; RCVRN prevents the interaction between GRK1 and RHO (By similarity). Interacts with GRK1 (By similarity). Interacts (phosphorylated form) with SAG (By similarity). Interacts with GNAT1 (By similarity). Interacts with GNAT3. SAG and G-proteins compete for a common binding site (By similarity). Interacts with PRCD; the interaction promotes PRCD stability (By similarity). Forms a complex with ASAP1 and ARF4. Forms a complex with ASAP1, RAB11A, Rabin8/RAB3IP, ARF4 and RAB11FIP3; the complex regulates Golgi-to-cilia rhodopsin/RHO transport in photoreceptors (By similarity).</text>
</comment>
<comment type="subcellular location">
    <subcellularLocation>
        <location evidence="1">Membrane</location>
        <topology evidence="1">Multi-pass membrane protein</topology>
    </subcellularLocation>
    <subcellularLocation>
        <location evidence="1">Cell projection</location>
        <location evidence="1">Cilium</location>
        <location evidence="1">Photoreceptor outer segment</location>
    </subcellularLocation>
    <text evidence="3">Synthesized in the inner segment (IS) of rod photoreceptor cells before vectorial transport to disk membranes in the rod outer segment (OS) photosensory cilia.</text>
</comment>
<comment type="PTM">
    <text evidence="1">Phosphorylated on some or all of the serine and threonine residues present in the C-terminal region.</text>
</comment>
<comment type="PTM">
    <text evidence="1">Contains one covalently linked retinal chromophore. Upon light absorption, the covalently bound 11-cis-retinal is converted to all-trans-retinal. After hydrolysis of the Schiff base and release of the covalently bound all-trans-retinal, active rhodopsin is regenerated by binding of a fresh molecule of 11-cis-retinal.</text>
</comment>
<comment type="similarity">
    <text evidence="6">Belongs to the G-protein coupled receptor 1 family. Opsin subfamily.</text>
</comment>